<comment type="similarity">
    <text evidence="1">Belongs to the universal ribosomal protein uS2 family.</text>
</comment>
<organism>
    <name type="scientific">Acaryochloris marina (strain MBIC 11017)</name>
    <dbReference type="NCBI Taxonomy" id="329726"/>
    <lineage>
        <taxon>Bacteria</taxon>
        <taxon>Bacillati</taxon>
        <taxon>Cyanobacteriota</taxon>
        <taxon>Cyanophyceae</taxon>
        <taxon>Acaryochloridales</taxon>
        <taxon>Acaryochloridaceae</taxon>
        <taxon>Acaryochloris</taxon>
    </lineage>
</organism>
<proteinExistence type="inferred from homology"/>
<protein>
    <recommendedName>
        <fullName evidence="1">Small ribosomal subunit protein uS2</fullName>
    </recommendedName>
    <alternativeName>
        <fullName evidence="3">30S ribosomal protein S2</fullName>
    </alternativeName>
</protein>
<sequence>MPVISLAQMLESGVHFGHQARRWNPKMDPYIFTERNGVHIIDLVQTAQLMDEAYHYVRSASESGKKFLFVGTKRQAAGIIAQEAARCGGYYVNQRWLGGMLTNWTTIKTRIERLKDLERRYESGIFDLLPKQEASMLRRELDKLQKYLGGLKQMHKIPDVVVIIDIRREYNAVQECQKLGLPIVSLLDTNCDPDWVDIPIPANDDAIRSIKLIIGKLADAIYEGRHGQVSAETFEGDDIPSAIDFEDETPEPVAEVADAEVAAAEPVAEAAPTAEAAPEEAPAEDAAPTAEAEEPAAE</sequence>
<evidence type="ECO:0000255" key="1">
    <source>
        <dbReference type="HAMAP-Rule" id="MF_00291"/>
    </source>
</evidence>
<evidence type="ECO:0000256" key="2">
    <source>
        <dbReference type="SAM" id="MobiDB-lite"/>
    </source>
</evidence>
<evidence type="ECO:0000305" key="3"/>
<dbReference type="EMBL" id="CP000828">
    <property type="protein sequence ID" value="ABW28422.1"/>
    <property type="molecule type" value="Genomic_DNA"/>
</dbReference>
<dbReference type="RefSeq" id="WP_012163821.1">
    <property type="nucleotide sequence ID" value="NC_009925.1"/>
</dbReference>
<dbReference type="SMR" id="B0C075"/>
<dbReference type="STRING" id="329726.AM1_3428"/>
<dbReference type="KEGG" id="amr:AM1_3428"/>
<dbReference type="eggNOG" id="COG0052">
    <property type="taxonomic scope" value="Bacteria"/>
</dbReference>
<dbReference type="HOGENOM" id="CLU_040318_1_2_3"/>
<dbReference type="OrthoDB" id="9808036at2"/>
<dbReference type="Proteomes" id="UP000000268">
    <property type="component" value="Chromosome"/>
</dbReference>
<dbReference type="GO" id="GO:0022627">
    <property type="term" value="C:cytosolic small ribosomal subunit"/>
    <property type="evidence" value="ECO:0007669"/>
    <property type="project" value="TreeGrafter"/>
</dbReference>
<dbReference type="GO" id="GO:0003735">
    <property type="term" value="F:structural constituent of ribosome"/>
    <property type="evidence" value="ECO:0007669"/>
    <property type="project" value="InterPro"/>
</dbReference>
<dbReference type="GO" id="GO:0006412">
    <property type="term" value="P:translation"/>
    <property type="evidence" value="ECO:0007669"/>
    <property type="project" value="UniProtKB-UniRule"/>
</dbReference>
<dbReference type="CDD" id="cd01425">
    <property type="entry name" value="RPS2"/>
    <property type="match status" value="1"/>
</dbReference>
<dbReference type="FunFam" id="1.10.287.610:FF:000001">
    <property type="entry name" value="30S ribosomal protein S2"/>
    <property type="match status" value="1"/>
</dbReference>
<dbReference type="Gene3D" id="3.40.50.10490">
    <property type="entry name" value="Glucose-6-phosphate isomerase like protein, domain 1"/>
    <property type="match status" value="1"/>
</dbReference>
<dbReference type="Gene3D" id="1.10.287.610">
    <property type="entry name" value="Helix hairpin bin"/>
    <property type="match status" value="1"/>
</dbReference>
<dbReference type="HAMAP" id="MF_00291_B">
    <property type="entry name" value="Ribosomal_uS2_B"/>
    <property type="match status" value="1"/>
</dbReference>
<dbReference type="InterPro" id="IPR001865">
    <property type="entry name" value="Ribosomal_uS2"/>
</dbReference>
<dbReference type="InterPro" id="IPR005706">
    <property type="entry name" value="Ribosomal_uS2_bac/mit/plastid"/>
</dbReference>
<dbReference type="InterPro" id="IPR018130">
    <property type="entry name" value="Ribosomal_uS2_CS"/>
</dbReference>
<dbReference type="InterPro" id="IPR023591">
    <property type="entry name" value="Ribosomal_uS2_flav_dom_sf"/>
</dbReference>
<dbReference type="NCBIfam" id="TIGR01011">
    <property type="entry name" value="rpsB_bact"/>
    <property type="match status" value="1"/>
</dbReference>
<dbReference type="PANTHER" id="PTHR12534">
    <property type="entry name" value="30S RIBOSOMAL PROTEIN S2 PROKARYOTIC AND ORGANELLAR"/>
    <property type="match status" value="1"/>
</dbReference>
<dbReference type="PANTHER" id="PTHR12534:SF0">
    <property type="entry name" value="SMALL RIBOSOMAL SUBUNIT PROTEIN US2M"/>
    <property type="match status" value="1"/>
</dbReference>
<dbReference type="Pfam" id="PF00318">
    <property type="entry name" value="Ribosomal_S2"/>
    <property type="match status" value="1"/>
</dbReference>
<dbReference type="PRINTS" id="PR00395">
    <property type="entry name" value="RIBOSOMALS2"/>
</dbReference>
<dbReference type="SUPFAM" id="SSF52313">
    <property type="entry name" value="Ribosomal protein S2"/>
    <property type="match status" value="1"/>
</dbReference>
<dbReference type="PROSITE" id="PS00962">
    <property type="entry name" value="RIBOSOMAL_S2_1"/>
    <property type="match status" value="1"/>
</dbReference>
<dbReference type="PROSITE" id="PS00963">
    <property type="entry name" value="RIBOSOMAL_S2_2"/>
    <property type="match status" value="1"/>
</dbReference>
<name>RS2_ACAM1</name>
<reference key="1">
    <citation type="journal article" date="2008" name="Proc. Natl. Acad. Sci. U.S.A.">
        <title>Niche adaptation and genome expansion in the chlorophyll d-producing cyanobacterium Acaryochloris marina.</title>
        <authorList>
            <person name="Swingley W.D."/>
            <person name="Chen M."/>
            <person name="Cheung P.C."/>
            <person name="Conrad A.L."/>
            <person name="Dejesa L.C."/>
            <person name="Hao J."/>
            <person name="Honchak B.M."/>
            <person name="Karbach L.E."/>
            <person name="Kurdoglu A."/>
            <person name="Lahiri S."/>
            <person name="Mastrian S.D."/>
            <person name="Miyashita H."/>
            <person name="Page L."/>
            <person name="Ramakrishna P."/>
            <person name="Satoh S."/>
            <person name="Sattley W.M."/>
            <person name="Shimada Y."/>
            <person name="Taylor H.L."/>
            <person name="Tomo T."/>
            <person name="Tsuchiya T."/>
            <person name="Wang Z.T."/>
            <person name="Raymond J."/>
            <person name="Mimuro M."/>
            <person name="Blankenship R.E."/>
            <person name="Touchman J.W."/>
        </authorList>
    </citation>
    <scope>NUCLEOTIDE SEQUENCE [LARGE SCALE GENOMIC DNA]</scope>
    <source>
        <strain>MBIC 11017</strain>
    </source>
</reference>
<keyword id="KW-1185">Reference proteome</keyword>
<keyword id="KW-0687">Ribonucleoprotein</keyword>
<keyword id="KW-0689">Ribosomal protein</keyword>
<feature type="chain" id="PRO_1000078866" description="Small ribosomal subunit protein uS2">
    <location>
        <begin position="1"/>
        <end position="298"/>
    </location>
</feature>
<feature type="region of interest" description="Disordered" evidence="2">
    <location>
        <begin position="232"/>
        <end position="298"/>
    </location>
</feature>
<feature type="compositionally biased region" description="Acidic residues" evidence="2">
    <location>
        <begin position="234"/>
        <end position="250"/>
    </location>
</feature>
<feature type="compositionally biased region" description="Low complexity" evidence="2">
    <location>
        <begin position="251"/>
        <end position="276"/>
    </location>
</feature>
<gene>
    <name evidence="1" type="primary">rpsB</name>
    <name evidence="1" type="synonym">rps2</name>
    <name type="ordered locus">AM1_3428</name>
</gene>
<accession>B0C075</accession>